<organism>
    <name type="scientific">Schizosaccharomyces pombe (strain 972 / ATCC 24843)</name>
    <name type="common">Fission yeast</name>
    <dbReference type="NCBI Taxonomy" id="284812"/>
    <lineage>
        <taxon>Eukaryota</taxon>
        <taxon>Fungi</taxon>
        <taxon>Dikarya</taxon>
        <taxon>Ascomycota</taxon>
        <taxon>Taphrinomycotina</taxon>
        <taxon>Schizosaccharomycetes</taxon>
        <taxon>Schizosaccharomycetales</taxon>
        <taxon>Schizosaccharomycetaceae</taxon>
        <taxon>Schizosaccharomyces</taxon>
    </lineage>
</organism>
<name>RL14_SCHPO</name>
<sequence length="134" mass="15210">MEGFKRYVEVGRVVLVTKGEYTGKLAVIVDIVDHKRALIDSPCSEFPRQVIRYGSVVLTHIVMKLPRGARSGIVAKKWKAQDVCNKWASSAWAKKLEAKKVRSQLNDFDRFAVMRLKKQRREQVNVAVAKALKA</sequence>
<reference key="1">
    <citation type="journal article" date="1999" name="Bioorg. Khim.">
        <title>Molecular cloning of some components of the translation apparatus of fission yeast Schizosaccharomyces pombe and a list of its cytoplasmic proteins genes.</title>
        <authorList>
            <person name="Shpakovskii G.V."/>
            <person name="Baranova G.M."/>
            <person name="Wood V."/>
            <person name="Gwilliam R.G."/>
            <person name="Shematorova E.K."/>
            <person name="Korol'chuk O.L."/>
            <person name="Lebedenko E.N."/>
        </authorList>
    </citation>
    <scope>NUCLEOTIDE SEQUENCE [MRNA]</scope>
    <source>
        <strain>972 / ATCC 24843</strain>
    </source>
</reference>
<reference key="2">
    <citation type="submission" date="1997-11" db="EMBL/GenBank/DDBJ databases">
        <title>Transcription of ribosomal genes is down regulated by ammonium starvation in fission yeast.</title>
        <authorList>
            <person name="Lenaers G."/>
            <person name="Perret E."/>
            <person name="Bonnet C."/>
            <person name="Caput D."/>
            <person name="Picard A."/>
        </authorList>
    </citation>
    <scope>NUCLEOTIDE SEQUENCE [MRNA]</scope>
    <source>
        <strain>972 / ATCC 24843</strain>
    </source>
</reference>
<reference key="3">
    <citation type="journal article" date="2002" name="Nature">
        <title>The genome sequence of Schizosaccharomyces pombe.</title>
        <authorList>
            <person name="Wood V."/>
            <person name="Gwilliam R."/>
            <person name="Rajandream M.A."/>
            <person name="Lyne M.H."/>
            <person name="Lyne R."/>
            <person name="Stewart A."/>
            <person name="Sgouros J.G."/>
            <person name="Peat N."/>
            <person name="Hayles J."/>
            <person name="Baker S.G."/>
            <person name="Basham D."/>
            <person name="Bowman S."/>
            <person name="Brooks K."/>
            <person name="Brown D."/>
            <person name="Brown S."/>
            <person name="Chillingworth T."/>
            <person name="Churcher C.M."/>
            <person name="Collins M."/>
            <person name="Connor R."/>
            <person name="Cronin A."/>
            <person name="Davis P."/>
            <person name="Feltwell T."/>
            <person name="Fraser A."/>
            <person name="Gentles S."/>
            <person name="Goble A."/>
            <person name="Hamlin N."/>
            <person name="Harris D.E."/>
            <person name="Hidalgo J."/>
            <person name="Hodgson G."/>
            <person name="Holroyd S."/>
            <person name="Hornsby T."/>
            <person name="Howarth S."/>
            <person name="Huckle E.J."/>
            <person name="Hunt S."/>
            <person name="Jagels K."/>
            <person name="James K.D."/>
            <person name="Jones L."/>
            <person name="Jones M."/>
            <person name="Leather S."/>
            <person name="McDonald S."/>
            <person name="McLean J."/>
            <person name="Mooney P."/>
            <person name="Moule S."/>
            <person name="Mungall K.L."/>
            <person name="Murphy L.D."/>
            <person name="Niblett D."/>
            <person name="Odell C."/>
            <person name="Oliver K."/>
            <person name="O'Neil S."/>
            <person name="Pearson D."/>
            <person name="Quail M.A."/>
            <person name="Rabbinowitsch E."/>
            <person name="Rutherford K.M."/>
            <person name="Rutter S."/>
            <person name="Saunders D."/>
            <person name="Seeger K."/>
            <person name="Sharp S."/>
            <person name="Skelton J."/>
            <person name="Simmonds M.N."/>
            <person name="Squares R."/>
            <person name="Squares S."/>
            <person name="Stevens K."/>
            <person name="Taylor K."/>
            <person name="Taylor R.G."/>
            <person name="Tivey A."/>
            <person name="Walsh S.V."/>
            <person name="Warren T."/>
            <person name="Whitehead S."/>
            <person name="Woodward J.R."/>
            <person name="Volckaert G."/>
            <person name="Aert R."/>
            <person name="Robben J."/>
            <person name="Grymonprez B."/>
            <person name="Weltjens I."/>
            <person name="Vanstreels E."/>
            <person name="Rieger M."/>
            <person name="Schaefer M."/>
            <person name="Mueller-Auer S."/>
            <person name="Gabel C."/>
            <person name="Fuchs M."/>
            <person name="Duesterhoeft A."/>
            <person name="Fritzc C."/>
            <person name="Holzer E."/>
            <person name="Moestl D."/>
            <person name="Hilbert H."/>
            <person name="Borzym K."/>
            <person name="Langer I."/>
            <person name="Beck A."/>
            <person name="Lehrach H."/>
            <person name="Reinhardt R."/>
            <person name="Pohl T.M."/>
            <person name="Eger P."/>
            <person name="Zimmermann W."/>
            <person name="Wedler H."/>
            <person name="Wambutt R."/>
            <person name="Purnelle B."/>
            <person name="Goffeau A."/>
            <person name="Cadieu E."/>
            <person name="Dreano S."/>
            <person name="Gloux S."/>
            <person name="Lelaure V."/>
            <person name="Mottier S."/>
            <person name="Galibert F."/>
            <person name="Aves S.J."/>
            <person name="Xiang Z."/>
            <person name="Hunt C."/>
            <person name="Moore K."/>
            <person name="Hurst S.M."/>
            <person name="Lucas M."/>
            <person name="Rochet M."/>
            <person name="Gaillardin C."/>
            <person name="Tallada V.A."/>
            <person name="Garzon A."/>
            <person name="Thode G."/>
            <person name="Daga R.R."/>
            <person name="Cruzado L."/>
            <person name="Jimenez J."/>
            <person name="Sanchez M."/>
            <person name="del Rey F."/>
            <person name="Benito J."/>
            <person name="Dominguez A."/>
            <person name="Revuelta J.L."/>
            <person name="Moreno S."/>
            <person name="Armstrong J."/>
            <person name="Forsburg S.L."/>
            <person name="Cerutti L."/>
            <person name="Lowe T."/>
            <person name="McCombie W.R."/>
            <person name="Paulsen I."/>
            <person name="Potashkin J."/>
            <person name="Shpakovski G.V."/>
            <person name="Ussery D."/>
            <person name="Barrell B.G."/>
            <person name="Nurse P."/>
        </authorList>
    </citation>
    <scope>NUCLEOTIDE SEQUENCE [LARGE SCALE GENOMIC DNA]</scope>
    <source>
        <strain>972 / ATCC 24843</strain>
    </source>
</reference>
<reference key="4">
    <citation type="journal article" date="2006" name="Nat. Biotechnol.">
        <title>ORFeome cloning and global analysis of protein localization in the fission yeast Schizosaccharomyces pombe.</title>
        <authorList>
            <person name="Matsuyama A."/>
            <person name="Arai R."/>
            <person name="Yashiroda Y."/>
            <person name="Shirai A."/>
            <person name="Kamata A."/>
            <person name="Sekido S."/>
            <person name="Kobayashi Y."/>
            <person name="Hashimoto A."/>
            <person name="Hamamoto M."/>
            <person name="Hiraoka Y."/>
            <person name="Horinouchi S."/>
            <person name="Yoshida M."/>
        </authorList>
    </citation>
    <scope>SUBCELLULAR LOCATION [LARGE SCALE ANALYSIS]</scope>
</reference>
<feature type="chain" id="PRO_0000132042" description="Large ribosomal subunit protein eL14">
    <location>
        <begin position="1"/>
        <end position="134"/>
    </location>
</feature>
<feature type="strand" evidence="4">
    <location>
        <begin position="12"/>
        <end position="16"/>
    </location>
</feature>
<feature type="turn" evidence="4">
    <location>
        <begin position="20"/>
        <end position="23"/>
    </location>
</feature>
<feature type="strand" evidence="4">
    <location>
        <begin position="25"/>
        <end position="31"/>
    </location>
</feature>
<feature type="strand" evidence="4">
    <location>
        <begin position="33"/>
        <end position="40"/>
    </location>
</feature>
<feature type="strand" evidence="4">
    <location>
        <begin position="49"/>
        <end position="52"/>
    </location>
</feature>
<feature type="helix" evidence="4">
    <location>
        <begin position="53"/>
        <end position="55"/>
    </location>
</feature>
<feature type="strand" evidence="4">
    <location>
        <begin position="56"/>
        <end position="62"/>
    </location>
</feature>
<feature type="helix" evidence="4">
    <location>
        <begin position="71"/>
        <end position="80"/>
    </location>
</feature>
<feature type="turn" evidence="4">
    <location>
        <begin position="84"/>
        <end position="89"/>
    </location>
</feature>
<feature type="helix" evidence="4">
    <location>
        <begin position="91"/>
        <end position="103"/>
    </location>
</feature>
<feature type="helix" evidence="4">
    <location>
        <begin position="107"/>
        <end position="121"/>
    </location>
</feature>
<dbReference type="EMBL" id="AF055375">
    <property type="protein sequence ID" value="AAC99315.1"/>
    <property type="molecule type" value="mRNA"/>
</dbReference>
<dbReference type="EMBL" id="AJ002732">
    <property type="protein sequence ID" value="CAA05694.1"/>
    <property type="status" value="ALT_FRAME"/>
    <property type="molecule type" value="mRNA"/>
</dbReference>
<dbReference type="EMBL" id="CU329670">
    <property type="protein sequence ID" value="CAB55854.1"/>
    <property type="molecule type" value="Genomic_DNA"/>
</dbReference>
<dbReference type="PIR" id="T43697">
    <property type="entry name" value="T43697"/>
</dbReference>
<dbReference type="RefSeq" id="NP_593924.1">
    <property type="nucleotide sequence ID" value="NM_001019353.2"/>
</dbReference>
<dbReference type="PDB" id="8ESQ">
    <property type="method" value="EM"/>
    <property type="resolution" value="2.80 A"/>
    <property type="chains" value="M=1-134"/>
</dbReference>
<dbReference type="PDB" id="8ESR">
    <property type="method" value="EM"/>
    <property type="resolution" value="3.20 A"/>
    <property type="chains" value="M=1-134"/>
</dbReference>
<dbReference type="PDB" id="8ETC">
    <property type="method" value="EM"/>
    <property type="resolution" value="3.10 A"/>
    <property type="chains" value="M=1-134"/>
</dbReference>
<dbReference type="PDB" id="8ETG">
    <property type="method" value="EM"/>
    <property type="resolution" value="3.40 A"/>
    <property type="chains" value="M=1-134"/>
</dbReference>
<dbReference type="PDB" id="8ETH">
    <property type="method" value="EM"/>
    <property type="resolution" value="3.80 A"/>
    <property type="chains" value="M=1-134"/>
</dbReference>
<dbReference type="PDB" id="8ETI">
    <property type="method" value="EM"/>
    <property type="resolution" value="3.70 A"/>
    <property type="chains" value="M=1-134"/>
</dbReference>
<dbReference type="PDB" id="8ETJ">
    <property type="method" value="EM"/>
    <property type="resolution" value="3.20 A"/>
    <property type="chains" value="M=1-134"/>
</dbReference>
<dbReference type="PDB" id="8EUG">
    <property type="method" value="EM"/>
    <property type="resolution" value="2.80 A"/>
    <property type="chains" value="M=1-134"/>
</dbReference>
<dbReference type="PDB" id="8EUI">
    <property type="method" value="EM"/>
    <property type="resolution" value="3.10 A"/>
    <property type="chains" value="M=1-134"/>
</dbReference>
<dbReference type="PDB" id="8EUP">
    <property type="method" value="EM"/>
    <property type="resolution" value="3.10 A"/>
    <property type="chains" value="M=1-134"/>
</dbReference>
<dbReference type="PDB" id="8EUY">
    <property type="method" value="EM"/>
    <property type="resolution" value="3.00 A"/>
    <property type="chains" value="M=1-134"/>
</dbReference>
<dbReference type="PDB" id="8EV3">
    <property type="method" value="EM"/>
    <property type="resolution" value="3.00 A"/>
    <property type="chains" value="M=1-134"/>
</dbReference>
<dbReference type="PDB" id="9AXT">
    <property type="method" value="EM"/>
    <property type="resolution" value="2.40 A"/>
    <property type="chains" value="BY=1-134"/>
</dbReference>
<dbReference type="PDB" id="9AXU">
    <property type="method" value="EM"/>
    <property type="resolution" value="1.94 A"/>
    <property type="chains" value="Y=1-134"/>
</dbReference>
<dbReference type="PDB" id="9AXV">
    <property type="method" value="EM"/>
    <property type="resolution" value="2.40 A"/>
    <property type="chains" value="BY=1-134"/>
</dbReference>
<dbReference type="PDBsum" id="8ESQ"/>
<dbReference type="PDBsum" id="8ESR"/>
<dbReference type="PDBsum" id="8ETC"/>
<dbReference type="PDBsum" id="8ETG"/>
<dbReference type="PDBsum" id="8ETH"/>
<dbReference type="PDBsum" id="8ETI"/>
<dbReference type="PDBsum" id="8ETJ"/>
<dbReference type="PDBsum" id="8EUG"/>
<dbReference type="PDBsum" id="8EUI"/>
<dbReference type="PDBsum" id="8EUP"/>
<dbReference type="PDBsum" id="8EUY"/>
<dbReference type="PDBsum" id="8EV3"/>
<dbReference type="PDBsum" id="9AXT"/>
<dbReference type="PDBsum" id="9AXU"/>
<dbReference type="PDBsum" id="9AXV"/>
<dbReference type="EMDB" id="EMD-43972"/>
<dbReference type="EMDB" id="EMD-43973"/>
<dbReference type="EMDB" id="EMD-43976"/>
<dbReference type="SMR" id="O94238"/>
<dbReference type="BioGRID" id="278887">
    <property type="interactions" value="6"/>
</dbReference>
<dbReference type="FunCoup" id="O94238">
    <property type="interactions" value="587"/>
</dbReference>
<dbReference type="IntAct" id="O94238">
    <property type="interactions" value="2"/>
</dbReference>
<dbReference type="STRING" id="284812.O94238"/>
<dbReference type="iPTMnet" id="O94238"/>
<dbReference type="SwissPalm" id="O94238"/>
<dbReference type="PaxDb" id="4896-SPAC1805.13.1"/>
<dbReference type="EnsemblFungi" id="SPAC1805.13.1">
    <property type="protein sequence ID" value="SPAC1805.13.1:pep"/>
    <property type="gene ID" value="SPAC1805.13"/>
</dbReference>
<dbReference type="GeneID" id="2542425"/>
<dbReference type="KEGG" id="spo:2542425"/>
<dbReference type="PomBase" id="SPAC1805.13">
    <property type="gene designation" value="rpl14"/>
</dbReference>
<dbReference type="VEuPathDB" id="FungiDB:SPAC1805.13"/>
<dbReference type="eggNOG" id="KOG3421">
    <property type="taxonomic scope" value="Eukaryota"/>
</dbReference>
<dbReference type="HOGENOM" id="CLU_082438_3_1_1"/>
<dbReference type="InParanoid" id="O94238"/>
<dbReference type="OMA" id="ANWRFVE"/>
<dbReference type="PhylomeDB" id="O94238"/>
<dbReference type="Reactome" id="R-SPO-156827">
    <property type="pathway name" value="L13a-mediated translational silencing of Ceruloplasmin expression"/>
</dbReference>
<dbReference type="Reactome" id="R-SPO-1799339">
    <property type="pathway name" value="SRP-dependent cotranslational protein targeting to membrane"/>
</dbReference>
<dbReference type="Reactome" id="R-SPO-72689">
    <property type="pathway name" value="Formation of a pool of free 40S subunits"/>
</dbReference>
<dbReference type="Reactome" id="R-SPO-72706">
    <property type="pathway name" value="GTP hydrolysis and joining of the 60S ribosomal subunit"/>
</dbReference>
<dbReference type="Reactome" id="R-SPO-975956">
    <property type="pathway name" value="Nonsense Mediated Decay (NMD) independent of the Exon Junction Complex (EJC)"/>
</dbReference>
<dbReference type="Reactome" id="R-SPO-975957">
    <property type="pathway name" value="Nonsense Mediated Decay (NMD) enhanced by the Exon Junction Complex (EJC)"/>
</dbReference>
<dbReference type="PRO" id="PR:O94238"/>
<dbReference type="Proteomes" id="UP000002485">
    <property type="component" value="Chromosome I"/>
</dbReference>
<dbReference type="GO" id="GO:0005829">
    <property type="term" value="C:cytosol"/>
    <property type="evidence" value="ECO:0007005"/>
    <property type="project" value="PomBase"/>
</dbReference>
<dbReference type="GO" id="GO:0022625">
    <property type="term" value="C:cytosolic large ribosomal subunit"/>
    <property type="evidence" value="ECO:0000269"/>
    <property type="project" value="PomBase"/>
</dbReference>
<dbReference type="GO" id="GO:0005634">
    <property type="term" value="C:nucleus"/>
    <property type="evidence" value="ECO:0007005"/>
    <property type="project" value="PomBase"/>
</dbReference>
<dbReference type="GO" id="GO:0030684">
    <property type="term" value="C:preribosome"/>
    <property type="evidence" value="ECO:0000314"/>
    <property type="project" value="PomBase"/>
</dbReference>
<dbReference type="GO" id="GO:0003723">
    <property type="term" value="F:RNA binding"/>
    <property type="evidence" value="ECO:0000318"/>
    <property type="project" value="GO_Central"/>
</dbReference>
<dbReference type="GO" id="GO:0003735">
    <property type="term" value="F:structural constituent of ribosome"/>
    <property type="evidence" value="ECO:0000318"/>
    <property type="project" value="GO_Central"/>
</dbReference>
<dbReference type="GO" id="GO:0002181">
    <property type="term" value="P:cytoplasmic translation"/>
    <property type="evidence" value="ECO:0000266"/>
    <property type="project" value="PomBase"/>
</dbReference>
<dbReference type="GO" id="GO:0042273">
    <property type="term" value="P:ribosomal large subunit biogenesis"/>
    <property type="evidence" value="ECO:0000318"/>
    <property type="project" value="GO_Central"/>
</dbReference>
<dbReference type="CDD" id="cd23702">
    <property type="entry name" value="eL14"/>
    <property type="match status" value="1"/>
</dbReference>
<dbReference type="FunFam" id="2.30.30.30:FF:000030">
    <property type="entry name" value="60S ribosomal protein L14"/>
    <property type="match status" value="1"/>
</dbReference>
<dbReference type="Gene3D" id="2.30.30.30">
    <property type="match status" value="1"/>
</dbReference>
<dbReference type="Gene3D" id="6.10.250.2270">
    <property type="match status" value="1"/>
</dbReference>
<dbReference type="InterPro" id="IPR005824">
    <property type="entry name" value="KOW"/>
</dbReference>
<dbReference type="InterPro" id="IPR014722">
    <property type="entry name" value="Rib_uL2_dom2"/>
</dbReference>
<dbReference type="InterPro" id="IPR039660">
    <property type="entry name" value="Ribosomal_eL14"/>
</dbReference>
<dbReference type="InterPro" id="IPR002784">
    <property type="entry name" value="Ribosomal_eL14_dom"/>
</dbReference>
<dbReference type="InterPro" id="IPR008991">
    <property type="entry name" value="Translation_prot_SH3-like_sf"/>
</dbReference>
<dbReference type="PANTHER" id="PTHR11127">
    <property type="entry name" value="60S RIBOSOMAL PROTEIN L14"/>
    <property type="match status" value="1"/>
</dbReference>
<dbReference type="PANTHER" id="PTHR11127:SF2">
    <property type="entry name" value="LARGE RIBOSOMAL SUBUNIT PROTEIN EL14"/>
    <property type="match status" value="1"/>
</dbReference>
<dbReference type="Pfam" id="PF00467">
    <property type="entry name" value="KOW"/>
    <property type="match status" value="1"/>
</dbReference>
<dbReference type="Pfam" id="PF01929">
    <property type="entry name" value="Ribosomal_L14e"/>
    <property type="match status" value="1"/>
</dbReference>
<dbReference type="SUPFAM" id="SSF50104">
    <property type="entry name" value="Translation proteins SH3-like domain"/>
    <property type="match status" value="1"/>
</dbReference>
<gene>
    <name type="primary">rpl14</name>
    <name type="ORF">SPAC1805.13</name>
</gene>
<evidence type="ECO:0000250" key="1">
    <source>
        <dbReference type="UniProtKB" id="P36105"/>
    </source>
</evidence>
<evidence type="ECO:0000269" key="2">
    <source>
    </source>
</evidence>
<evidence type="ECO:0000305" key="3"/>
<evidence type="ECO:0007829" key="4">
    <source>
        <dbReference type="PDB" id="8EUY"/>
    </source>
</evidence>
<keyword id="KW-0002">3D-structure</keyword>
<keyword id="KW-0963">Cytoplasm</keyword>
<keyword id="KW-0539">Nucleus</keyword>
<keyword id="KW-1185">Reference proteome</keyword>
<keyword id="KW-0687">Ribonucleoprotein</keyword>
<keyword id="KW-0689">Ribosomal protein</keyword>
<accession>O94238</accession>
<accession>O14315</accession>
<proteinExistence type="evidence at protein level"/>
<comment type="function">
    <text evidence="1">Component of the ribosome, a large ribonucleoprotein complex responsible for the synthesis of proteins in the cell. The small ribosomal subunit (SSU) binds messenger RNAs (mRNAs) and translates the encoded message by selecting cognate aminoacyl-transfer RNA (tRNA) molecules. The large subunit (LSU) contains the ribosomal catalytic site termed the peptidyl transferase center (PTC), which catalyzes the formation of peptide bonds, thereby polymerizing the amino acids delivered by tRNAs into a polypeptide chain. The nascent polypeptides leave the ribosome through a tunnel in the LSU and interact with protein factors that function in enzymatic processing, targeting, and the membrane insertion of nascent chains at the exit of the ribosomal tunnel.</text>
</comment>
<comment type="subunit">
    <text evidence="1">Component of the large ribosomal subunit (LSU). Mature yeast ribosomes consist of a small (40S) and a large (60S) subunit. The 40S small subunit contains 1 molecule of ribosomal RNA (18S rRNA) and at least 33 different proteins. The large 60S subunit contains 3 rRNA molecules (25S, 5.8S and 5S rRNA) and at least 46 different proteins.</text>
</comment>
<comment type="subcellular location">
    <subcellularLocation>
        <location evidence="2">Cytoplasm</location>
    </subcellularLocation>
    <subcellularLocation>
        <location evidence="2">Nucleus</location>
    </subcellularLocation>
</comment>
<comment type="similarity">
    <text evidence="3">Belongs to the eukaryotic ribosomal protein eL14 family.</text>
</comment>
<comment type="sequence caution" evidence="3">
    <conflict type="frameshift">
        <sequence resource="EMBL-CDS" id="CAA05694"/>
    </conflict>
</comment>
<protein>
    <recommendedName>
        <fullName evidence="3">Large ribosomal subunit protein eL14</fullName>
    </recommendedName>
    <alternativeName>
        <fullName>60S ribosomal protein L14</fullName>
    </alternativeName>
</protein>